<reference key="1">
    <citation type="journal article" date="2004" name="Zool. Scr.">
        <title>First molecular evidence for reassessing phylogenetic affinities between genets (Genetta) and the enigmatic genet-like taxa Osbornictis, Poiana and Prionodon (Carnivora, Viverridae).</title>
        <authorList>
            <person name="Gaubert P."/>
            <person name="Tranier M."/>
            <person name="Delmas A.-S."/>
            <person name="Colyn M."/>
            <person name="Veron G."/>
        </authorList>
    </citation>
    <scope>NUCLEOTIDE SEQUENCE [GENOMIC DNA]</scope>
</reference>
<comment type="function">
    <text evidence="2">Component of the ubiquinol-cytochrome c reductase complex (complex III or cytochrome b-c1 complex) that is part of the mitochondrial respiratory chain. The b-c1 complex mediates electron transfer from ubiquinol to cytochrome c. Contributes to the generation of a proton gradient across the mitochondrial membrane that is then used for ATP synthesis.</text>
</comment>
<comment type="cofactor">
    <cofactor evidence="2">
        <name>heme b</name>
        <dbReference type="ChEBI" id="CHEBI:60344"/>
    </cofactor>
    <text evidence="2">Binds 2 heme b groups non-covalently.</text>
</comment>
<comment type="subunit">
    <text evidence="2">The cytochrome bc1 complex contains 11 subunits: 3 respiratory subunits (MT-CYB, CYC1 and UQCRFS1), 2 core proteins (UQCRC1 and UQCRC2) and 6 low-molecular weight proteins (UQCRH/QCR6, UQCRB/QCR7, UQCRQ/QCR8, UQCR10/QCR9, UQCR11/QCR10 and a cleavage product of UQCRFS1). This cytochrome bc1 complex then forms a dimer.</text>
</comment>
<comment type="subcellular location">
    <subcellularLocation>
        <location evidence="2">Mitochondrion inner membrane</location>
        <topology evidence="2">Multi-pass membrane protein</topology>
    </subcellularLocation>
</comment>
<comment type="miscellaneous">
    <text evidence="1">Heme 1 (or BL or b562) is low-potential and absorbs at about 562 nm, and heme 2 (or BH or b566) is high-potential and absorbs at about 566 nm.</text>
</comment>
<comment type="similarity">
    <text evidence="3 4">Belongs to the cytochrome b family.</text>
</comment>
<comment type="caution">
    <text evidence="2">The full-length protein contains only eight transmembrane helices, not nine as predicted by bioinformatics tools.</text>
</comment>
<organism>
    <name type="scientific">Civettictis civetta</name>
    <name type="common">African civet</name>
    <dbReference type="NCBI Taxonomy" id="94186"/>
    <lineage>
        <taxon>Eukaryota</taxon>
        <taxon>Metazoa</taxon>
        <taxon>Chordata</taxon>
        <taxon>Craniata</taxon>
        <taxon>Vertebrata</taxon>
        <taxon>Euteleostomi</taxon>
        <taxon>Mammalia</taxon>
        <taxon>Eutheria</taxon>
        <taxon>Laurasiatheria</taxon>
        <taxon>Carnivora</taxon>
        <taxon>Feliformia</taxon>
        <taxon>Viverridae</taxon>
        <taxon>Viverrinae</taxon>
        <taxon>Civettictis</taxon>
    </lineage>
</organism>
<accession>Q71FJ2</accession>
<keyword id="KW-0249">Electron transport</keyword>
<keyword id="KW-0349">Heme</keyword>
<keyword id="KW-0408">Iron</keyword>
<keyword id="KW-0472">Membrane</keyword>
<keyword id="KW-0479">Metal-binding</keyword>
<keyword id="KW-0496">Mitochondrion</keyword>
<keyword id="KW-0999">Mitochondrion inner membrane</keyword>
<keyword id="KW-0679">Respiratory chain</keyword>
<keyword id="KW-0812">Transmembrane</keyword>
<keyword id="KW-1133">Transmembrane helix</keyword>
<keyword id="KW-0813">Transport</keyword>
<keyword id="KW-0830">Ubiquinone</keyword>
<name>CYB_CIVCI</name>
<sequence>MTNMRKSHPLAKIINESLIDLPAPSNISAWWNFGSLLGICLILQILTGLFLAMHYTADTTTAFSSVTHICRDVNYGWIIRYMHANGASMFFICLFIHVGRGMYYGSYTFSETWNIGILLLFAAMATAFMGYVLPWGQMSFWGATVITNLLSAIPYIGTNLVEWVWGGFSVDKATLTRFFAFHFILPFIISALAAVHLLFLHETGSNNPSGMVSDSDKIPFHPYYTIKDILGLLLLILVLMLLVLFSPDLLGDPDNYTPANPLSTPPHIKPEWYFLFAYAILRSIPNKLGGVLALVLSILILAVIPLLHTSKQRSMMFRPLSQCLFWLLTADLLTLTWIGGQPVEHPFMTMGQLASILYFSILLILMPISGTIENRLLKW</sequence>
<gene>
    <name type="primary">MT-CYB</name>
    <name type="synonym">COB</name>
    <name type="synonym">CYTB</name>
    <name type="synonym">MTCYB</name>
</gene>
<proteinExistence type="inferred from homology"/>
<evidence type="ECO:0000250" key="1"/>
<evidence type="ECO:0000250" key="2">
    <source>
        <dbReference type="UniProtKB" id="P00157"/>
    </source>
</evidence>
<evidence type="ECO:0000255" key="3">
    <source>
        <dbReference type="PROSITE-ProRule" id="PRU00967"/>
    </source>
</evidence>
<evidence type="ECO:0000255" key="4">
    <source>
        <dbReference type="PROSITE-ProRule" id="PRU00968"/>
    </source>
</evidence>
<geneLocation type="mitochondrion"/>
<protein>
    <recommendedName>
        <fullName>Cytochrome b</fullName>
    </recommendedName>
    <alternativeName>
        <fullName>Complex III subunit 3</fullName>
    </alternativeName>
    <alternativeName>
        <fullName>Complex III subunit III</fullName>
    </alternativeName>
    <alternativeName>
        <fullName>Cytochrome b-c1 complex subunit 3</fullName>
    </alternativeName>
    <alternativeName>
        <fullName>Ubiquinol-cytochrome-c reductase complex cytochrome b subunit</fullName>
    </alternativeName>
</protein>
<feature type="chain" id="PRO_0000254790" description="Cytochrome b">
    <location>
        <begin position="1"/>
        <end position="379"/>
    </location>
</feature>
<feature type="transmembrane region" description="Helical" evidence="2">
    <location>
        <begin position="33"/>
        <end position="53"/>
    </location>
</feature>
<feature type="transmembrane region" description="Helical" evidence="2">
    <location>
        <begin position="77"/>
        <end position="98"/>
    </location>
</feature>
<feature type="transmembrane region" description="Helical" evidence="2">
    <location>
        <begin position="113"/>
        <end position="133"/>
    </location>
</feature>
<feature type="transmembrane region" description="Helical" evidence="2">
    <location>
        <begin position="178"/>
        <end position="198"/>
    </location>
</feature>
<feature type="transmembrane region" description="Helical" evidence="2">
    <location>
        <begin position="226"/>
        <end position="246"/>
    </location>
</feature>
<feature type="transmembrane region" description="Helical" evidence="2">
    <location>
        <begin position="288"/>
        <end position="308"/>
    </location>
</feature>
<feature type="transmembrane region" description="Helical" evidence="2">
    <location>
        <begin position="320"/>
        <end position="340"/>
    </location>
</feature>
<feature type="transmembrane region" description="Helical" evidence="2">
    <location>
        <begin position="347"/>
        <end position="367"/>
    </location>
</feature>
<feature type="binding site" description="axial binding residue" evidence="2">
    <location>
        <position position="83"/>
    </location>
    <ligand>
        <name>heme b</name>
        <dbReference type="ChEBI" id="CHEBI:60344"/>
        <label>b562</label>
    </ligand>
    <ligandPart>
        <name>Fe</name>
        <dbReference type="ChEBI" id="CHEBI:18248"/>
    </ligandPart>
</feature>
<feature type="binding site" description="axial binding residue" evidence="2">
    <location>
        <position position="97"/>
    </location>
    <ligand>
        <name>heme b</name>
        <dbReference type="ChEBI" id="CHEBI:60344"/>
        <label>b566</label>
    </ligand>
    <ligandPart>
        <name>Fe</name>
        <dbReference type="ChEBI" id="CHEBI:18248"/>
    </ligandPart>
</feature>
<feature type="binding site" description="axial binding residue" evidence="2">
    <location>
        <position position="182"/>
    </location>
    <ligand>
        <name>heme b</name>
        <dbReference type="ChEBI" id="CHEBI:60344"/>
        <label>b562</label>
    </ligand>
    <ligandPart>
        <name>Fe</name>
        <dbReference type="ChEBI" id="CHEBI:18248"/>
    </ligandPart>
</feature>
<feature type="binding site" description="axial binding residue" evidence="2">
    <location>
        <position position="196"/>
    </location>
    <ligand>
        <name>heme b</name>
        <dbReference type="ChEBI" id="CHEBI:60344"/>
        <label>b566</label>
    </ligand>
    <ligandPart>
        <name>Fe</name>
        <dbReference type="ChEBI" id="CHEBI:18248"/>
    </ligandPart>
</feature>
<feature type="binding site" evidence="2">
    <location>
        <position position="201"/>
    </location>
    <ligand>
        <name>a ubiquinone</name>
        <dbReference type="ChEBI" id="CHEBI:16389"/>
    </ligand>
</feature>
<dbReference type="EMBL" id="AF511043">
    <property type="protein sequence ID" value="AAQ08019.1"/>
    <property type="molecule type" value="Genomic_DNA"/>
</dbReference>
<dbReference type="SMR" id="Q71FJ2"/>
<dbReference type="GO" id="GO:0005743">
    <property type="term" value="C:mitochondrial inner membrane"/>
    <property type="evidence" value="ECO:0007669"/>
    <property type="project" value="UniProtKB-SubCell"/>
</dbReference>
<dbReference type="GO" id="GO:0045275">
    <property type="term" value="C:respiratory chain complex III"/>
    <property type="evidence" value="ECO:0007669"/>
    <property type="project" value="InterPro"/>
</dbReference>
<dbReference type="GO" id="GO:0046872">
    <property type="term" value="F:metal ion binding"/>
    <property type="evidence" value="ECO:0007669"/>
    <property type="project" value="UniProtKB-KW"/>
</dbReference>
<dbReference type="GO" id="GO:0008121">
    <property type="term" value="F:ubiquinol-cytochrome-c reductase activity"/>
    <property type="evidence" value="ECO:0007669"/>
    <property type="project" value="InterPro"/>
</dbReference>
<dbReference type="GO" id="GO:0006122">
    <property type="term" value="P:mitochondrial electron transport, ubiquinol to cytochrome c"/>
    <property type="evidence" value="ECO:0007669"/>
    <property type="project" value="TreeGrafter"/>
</dbReference>
<dbReference type="CDD" id="cd00290">
    <property type="entry name" value="cytochrome_b_C"/>
    <property type="match status" value="1"/>
</dbReference>
<dbReference type="CDD" id="cd00284">
    <property type="entry name" value="Cytochrome_b_N"/>
    <property type="match status" value="1"/>
</dbReference>
<dbReference type="FunFam" id="1.20.810.10:FF:000002">
    <property type="entry name" value="Cytochrome b"/>
    <property type="match status" value="1"/>
</dbReference>
<dbReference type="Gene3D" id="1.20.810.10">
    <property type="entry name" value="Cytochrome Bc1 Complex, Chain C"/>
    <property type="match status" value="1"/>
</dbReference>
<dbReference type="InterPro" id="IPR005798">
    <property type="entry name" value="Cyt_b/b6_C"/>
</dbReference>
<dbReference type="InterPro" id="IPR036150">
    <property type="entry name" value="Cyt_b/b6_C_sf"/>
</dbReference>
<dbReference type="InterPro" id="IPR005797">
    <property type="entry name" value="Cyt_b/b6_N"/>
</dbReference>
<dbReference type="InterPro" id="IPR027387">
    <property type="entry name" value="Cytb/b6-like_sf"/>
</dbReference>
<dbReference type="InterPro" id="IPR030689">
    <property type="entry name" value="Cytochrome_b"/>
</dbReference>
<dbReference type="InterPro" id="IPR048260">
    <property type="entry name" value="Cytochrome_b_C_euk/bac"/>
</dbReference>
<dbReference type="InterPro" id="IPR048259">
    <property type="entry name" value="Cytochrome_b_N_euk/bac"/>
</dbReference>
<dbReference type="InterPro" id="IPR016174">
    <property type="entry name" value="Di-haem_cyt_TM"/>
</dbReference>
<dbReference type="PANTHER" id="PTHR19271">
    <property type="entry name" value="CYTOCHROME B"/>
    <property type="match status" value="1"/>
</dbReference>
<dbReference type="PANTHER" id="PTHR19271:SF16">
    <property type="entry name" value="CYTOCHROME B"/>
    <property type="match status" value="1"/>
</dbReference>
<dbReference type="Pfam" id="PF00032">
    <property type="entry name" value="Cytochrom_B_C"/>
    <property type="match status" value="1"/>
</dbReference>
<dbReference type="Pfam" id="PF00033">
    <property type="entry name" value="Cytochrome_B"/>
    <property type="match status" value="1"/>
</dbReference>
<dbReference type="PIRSF" id="PIRSF038885">
    <property type="entry name" value="COB"/>
    <property type="match status" value="1"/>
</dbReference>
<dbReference type="SUPFAM" id="SSF81648">
    <property type="entry name" value="a domain/subunit of cytochrome bc1 complex (Ubiquinol-cytochrome c reductase)"/>
    <property type="match status" value="1"/>
</dbReference>
<dbReference type="SUPFAM" id="SSF81342">
    <property type="entry name" value="Transmembrane di-heme cytochromes"/>
    <property type="match status" value="1"/>
</dbReference>
<dbReference type="PROSITE" id="PS51003">
    <property type="entry name" value="CYTB_CTER"/>
    <property type="match status" value="1"/>
</dbReference>
<dbReference type="PROSITE" id="PS51002">
    <property type="entry name" value="CYTB_NTER"/>
    <property type="match status" value="1"/>
</dbReference>